<keyword id="KW-0963">Cytoplasm</keyword>
<keyword id="KW-0378">Hydrolase</keyword>
<keyword id="KW-1185">Reference proteome</keyword>
<keyword id="KW-0694">RNA-binding</keyword>
<keyword id="KW-0820">tRNA-binding</keyword>
<name>DTD_GEOMG</name>
<reference key="1">
    <citation type="journal article" date="2009" name="BMC Microbiol.">
        <title>The genome sequence of Geobacter metallireducens: features of metabolism, physiology and regulation common and dissimilar to Geobacter sulfurreducens.</title>
        <authorList>
            <person name="Aklujkar M."/>
            <person name="Krushkal J."/>
            <person name="DiBartolo G."/>
            <person name="Lapidus A."/>
            <person name="Land M.L."/>
            <person name="Lovley D.R."/>
        </authorList>
    </citation>
    <scope>NUCLEOTIDE SEQUENCE [LARGE SCALE GENOMIC DNA]</scope>
    <source>
        <strain>ATCC 53774 / DSM 7210 / GS-15</strain>
    </source>
</reference>
<feature type="chain" id="PRO_0000259284" description="D-aminoacyl-tRNA deacylase">
    <location>
        <begin position="1"/>
        <end position="151"/>
    </location>
</feature>
<feature type="short sequence motif" description="Gly-cisPro motif, important for rejection of L-amino acids" evidence="1">
    <location>
        <begin position="137"/>
        <end position="138"/>
    </location>
</feature>
<proteinExistence type="inferred from homology"/>
<sequence length="151" mass="16116">MKAVIQRVSEARVVVDGEVVGAIERGILVLLGVEKGDAERDAAWLAEKVAGLRIFEDEAGKMNLSVREVTGGILAVSQFTLAGNCAKGRRPSFDTAAPPDEGKRLYGRFVDFMRETGIPTATGIFQADMKVHLVNDGPVTFILESPKATGG</sequence>
<accession>Q39RA1</accession>
<comment type="function">
    <text evidence="1">An aminoacyl-tRNA editing enzyme that deacylates mischarged D-aminoacyl-tRNAs. Also deacylates mischarged glycyl-tRNA(Ala), protecting cells against glycine mischarging by AlaRS. Acts via tRNA-based rather than protein-based catalysis; rejects L-amino acids rather than detecting D-amino acids in the active site. By recycling D-aminoacyl-tRNA to D-amino acids and free tRNA molecules, this enzyme counteracts the toxicity associated with the formation of D-aminoacyl-tRNA entities in vivo and helps enforce protein L-homochirality.</text>
</comment>
<comment type="catalytic activity">
    <reaction evidence="1">
        <text>glycyl-tRNA(Ala) + H2O = tRNA(Ala) + glycine + H(+)</text>
        <dbReference type="Rhea" id="RHEA:53744"/>
        <dbReference type="Rhea" id="RHEA-COMP:9657"/>
        <dbReference type="Rhea" id="RHEA-COMP:13640"/>
        <dbReference type="ChEBI" id="CHEBI:15377"/>
        <dbReference type="ChEBI" id="CHEBI:15378"/>
        <dbReference type="ChEBI" id="CHEBI:57305"/>
        <dbReference type="ChEBI" id="CHEBI:78442"/>
        <dbReference type="ChEBI" id="CHEBI:78522"/>
        <dbReference type="EC" id="3.1.1.96"/>
    </reaction>
</comment>
<comment type="catalytic activity">
    <reaction evidence="1">
        <text>a D-aminoacyl-tRNA + H2O = a tRNA + a D-alpha-amino acid + H(+)</text>
        <dbReference type="Rhea" id="RHEA:13953"/>
        <dbReference type="Rhea" id="RHEA-COMP:10123"/>
        <dbReference type="Rhea" id="RHEA-COMP:10124"/>
        <dbReference type="ChEBI" id="CHEBI:15377"/>
        <dbReference type="ChEBI" id="CHEBI:15378"/>
        <dbReference type="ChEBI" id="CHEBI:59871"/>
        <dbReference type="ChEBI" id="CHEBI:78442"/>
        <dbReference type="ChEBI" id="CHEBI:79333"/>
        <dbReference type="EC" id="3.1.1.96"/>
    </reaction>
</comment>
<comment type="subunit">
    <text evidence="1">Homodimer.</text>
</comment>
<comment type="subcellular location">
    <subcellularLocation>
        <location evidence="1">Cytoplasm</location>
    </subcellularLocation>
</comment>
<comment type="domain">
    <text evidence="1">A Gly-cisPro motif from one monomer fits into the active site of the other monomer to allow specific chiral rejection of L-amino acids.</text>
</comment>
<comment type="similarity">
    <text evidence="1">Belongs to the DTD family.</text>
</comment>
<evidence type="ECO:0000255" key="1">
    <source>
        <dbReference type="HAMAP-Rule" id="MF_00518"/>
    </source>
</evidence>
<dbReference type="EC" id="3.1.1.96" evidence="1"/>
<dbReference type="EMBL" id="CP000148">
    <property type="protein sequence ID" value="ABB33223.1"/>
    <property type="molecule type" value="Genomic_DNA"/>
</dbReference>
<dbReference type="RefSeq" id="WP_004514320.1">
    <property type="nucleotide sequence ID" value="NC_007517.1"/>
</dbReference>
<dbReference type="SMR" id="Q39RA1"/>
<dbReference type="STRING" id="269799.Gmet_3008"/>
<dbReference type="KEGG" id="gme:Gmet_3008"/>
<dbReference type="eggNOG" id="COG1490">
    <property type="taxonomic scope" value="Bacteria"/>
</dbReference>
<dbReference type="HOGENOM" id="CLU_076901_1_0_7"/>
<dbReference type="Proteomes" id="UP000007073">
    <property type="component" value="Chromosome"/>
</dbReference>
<dbReference type="GO" id="GO:0005737">
    <property type="term" value="C:cytoplasm"/>
    <property type="evidence" value="ECO:0007669"/>
    <property type="project" value="UniProtKB-SubCell"/>
</dbReference>
<dbReference type="GO" id="GO:0051500">
    <property type="term" value="F:D-tyrosyl-tRNA(Tyr) deacylase activity"/>
    <property type="evidence" value="ECO:0007669"/>
    <property type="project" value="TreeGrafter"/>
</dbReference>
<dbReference type="GO" id="GO:0106026">
    <property type="term" value="F:Gly-tRNA(Ala) deacylase activity"/>
    <property type="evidence" value="ECO:0007669"/>
    <property type="project" value="UniProtKB-UniRule"/>
</dbReference>
<dbReference type="GO" id="GO:0043908">
    <property type="term" value="F:Ser(Gly)-tRNA(Ala) hydrolase activity"/>
    <property type="evidence" value="ECO:0007669"/>
    <property type="project" value="UniProtKB-UniRule"/>
</dbReference>
<dbReference type="GO" id="GO:0000049">
    <property type="term" value="F:tRNA binding"/>
    <property type="evidence" value="ECO:0007669"/>
    <property type="project" value="UniProtKB-UniRule"/>
</dbReference>
<dbReference type="GO" id="GO:0019478">
    <property type="term" value="P:D-amino acid catabolic process"/>
    <property type="evidence" value="ECO:0007669"/>
    <property type="project" value="UniProtKB-UniRule"/>
</dbReference>
<dbReference type="CDD" id="cd00563">
    <property type="entry name" value="Dtyr_deacylase"/>
    <property type="match status" value="1"/>
</dbReference>
<dbReference type="FunFam" id="3.50.80.10:FF:000001">
    <property type="entry name" value="D-aminoacyl-tRNA deacylase"/>
    <property type="match status" value="1"/>
</dbReference>
<dbReference type="Gene3D" id="3.50.80.10">
    <property type="entry name" value="D-tyrosyl-tRNA(Tyr) deacylase"/>
    <property type="match status" value="1"/>
</dbReference>
<dbReference type="HAMAP" id="MF_00518">
    <property type="entry name" value="Deacylase_Dtd"/>
    <property type="match status" value="1"/>
</dbReference>
<dbReference type="InterPro" id="IPR003732">
    <property type="entry name" value="Daa-tRNA_deacyls_DTD"/>
</dbReference>
<dbReference type="InterPro" id="IPR023509">
    <property type="entry name" value="DTD-like_sf"/>
</dbReference>
<dbReference type="NCBIfam" id="TIGR00256">
    <property type="entry name" value="D-aminoacyl-tRNA deacylase"/>
    <property type="match status" value="1"/>
</dbReference>
<dbReference type="PANTHER" id="PTHR10472:SF5">
    <property type="entry name" value="D-AMINOACYL-TRNA DEACYLASE 1"/>
    <property type="match status" value="1"/>
</dbReference>
<dbReference type="PANTHER" id="PTHR10472">
    <property type="entry name" value="D-TYROSYL-TRNA TYR DEACYLASE"/>
    <property type="match status" value="1"/>
</dbReference>
<dbReference type="Pfam" id="PF02580">
    <property type="entry name" value="Tyr_Deacylase"/>
    <property type="match status" value="1"/>
</dbReference>
<dbReference type="SUPFAM" id="SSF69500">
    <property type="entry name" value="DTD-like"/>
    <property type="match status" value="1"/>
</dbReference>
<organism>
    <name type="scientific">Geobacter metallireducens (strain ATCC 53774 / DSM 7210 / GS-15)</name>
    <dbReference type="NCBI Taxonomy" id="269799"/>
    <lineage>
        <taxon>Bacteria</taxon>
        <taxon>Pseudomonadati</taxon>
        <taxon>Thermodesulfobacteriota</taxon>
        <taxon>Desulfuromonadia</taxon>
        <taxon>Geobacterales</taxon>
        <taxon>Geobacteraceae</taxon>
        <taxon>Geobacter</taxon>
    </lineage>
</organism>
<protein>
    <recommendedName>
        <fullName evidence="1">D-aminoacyl-tRNA deacylase</fullName>
        <shortName evidence="1">DTD</shortName>
        <ecNumber evidence="1">3.1.1.96</ecNumber>
    </recommendedName>
    <alternativeName>
        <fullName evidence="1">Gly-tRNA(Ala) deacylase</fullName>
    </alternativeName>
</protein>
<gene>
    <name evidence="1" type="primary">dtd</name>
    <name type="ordered locus">Gmet_3008</name>
</gene>